<sequence length="533" mass="57100">MQGACVLLLLGLHLQLSLGLVPVEEEDPAFWNRQAAQALDVAKKLQPIQTAAKNVILFLGDGMGVPTVTATRILKGQMNGKLGPETPLAMDQFPYVALSKTYNVDRQVPDSAGTATAYLCGVKGNYRTIGVSAAARYNQCKTTRGNEVTSVMNRAKKAGKSVGVVTTTRVQHASPAGAYAHTVNRNWYSDADLPADAQMNGCQDIAAQLVNNMDIDVILGGGRKYMFPVGTPDPEYPDDASVNGVRKRKQNLVQAWQAKHQGAQYVWNRTALLQAADDSSVTHLMGLFEPADMKYNVQQDHTKDPTLQEMTEVALRVVSRNPRGFYLFVEGGRIDHGHHDDKAYMALTEAGMFDNAIAKANELTSELDTLILVTADHSHVFSFGGYTLRGTSIFGLAPSKALDSKSYTSILYGNGPGYALGGGSRPDVNDSTSEDPSYQQQAAVPQASETHGGEDVAVFARGPQAHLVHGVEEETFVAHIMAFAGCVEPYTDCNLPAPTTATSIPDAAHLAASPPPLALLAGAMLLLLAPTLY</sequence>
<accession>P19111</accession>
<accession>Q28124</accession>
<reference key="1">
    <citation type="journal article" date="1993" name="Biochem. J.">
        <title>Cloning and expression of the bovine intestinal alkaline phosphatase gene: biochemical characterization of the recombinant enzyme.</title>
        <authorList>
            <person name="Weissig H."/>
            <person name="Schildge A."/>
            <person name="Hoylaerts M.F."/>
            <person name="Iqbal M."/>
            <person name="Millan J.L."/>
        </authorList>
    </citation>
    <scope>NUCLEOTIDE SEQUENCE [GENOMIC DNA]</scope>
    <source>
        <tissue>Liver</tissue>
    </source>
</reference>
<reference key="2">
    <citation type="journal article" date="1985" name="Biochim. Biophys. Acta">
        <title>The active-site and amino-terminal amino acid sequence of bovine intestinal alkaline phosphatase.</title>
        <authorList>
            <person name="Culp J.S."/>
            <person name="Hermodson M."/>
            <person name="Butler L.G."/>
        </authorList>
    </citation>
    <scope>PROTEIN SEQUENCE OF 20-35 AND 91-152</scope>
    <scope>ACTIVE SITE</scope>
    <source>
        <tissue>Intestine</tissue>
    </source>
</reference>
<reference key="3">
    <citation type="journal article" date="1986" name="Proc. Natl. Acad. Sci. U.S.A.">
        <title>Partial sequencing of human adult, human fetal, and bovine intestinal alkaline phosphatases: comparison with the human placental and liver isozymes.</title>
        <authorList>
            <person name="Hua J.-C."/>
            <person name="Berger J."/>
            <person name="Pan Y.C.E."/>
            <person name="Hulmes J.D."/>
            <person name="Udenfriend S."/>
        </authorList>
    </citation>
    <scope>PROTEIN SEQUENCE OF 20-63</scope>
</reference>
<keyword id="KW-0106">Calcium</keyword>
<keyword id="KW-1003">Cell membrane</keyword>
<keyword id="KW-0903">Direct protein sequencing</keyword>
<keyword id="KW-1015">Disulfide bond</keyword>
<keyword id="KW-0325">Glycoprotein</keyword>
<keyword id="KW-0336">GPI-anchor</keyword>
<keyword id="KW-0378">Hydrolase</keyword>
<keyword id="KW-0449">Lipoprotein</keyword>
<keyword id="KW-0460">Magnesium</keyword>
<keyword id="KW-0472">Membrane</keyword>
<keyword id="KW-0479">Metal-binding</keyword>
<keyword id="KW-1185">Reference proteome</keyword>
<keyword id="KW-0732">Signal</keyword>
<keyword id="KW-0862">Zinc</keyword>
<proteinExistence type="evidence at protein level"/>
<dbReference type="EC" id="3.1.3.1"/>
<dbReference type="EMBL" id="L07733">
    <property type="protein sequence ID" value="AAA30571.1"/>
    <property type="molecule type" value="Genomic_DNA"/>
</dbReference>
<dbReference type="PIR" id="S30364">
    <property type="entry name" value="S30364"/>
</dbReference>
<dbReference type="SMR" id="P19111"/>
<dbReference type="FunCoup" id="P19111">
    <property type="interactions" value="28"/>
</dbReference>
<dbReference type="IntAct" id="P19111">
    <property type="interactions" value="2"/>
</dbReference>
<dbReference type="MINT" id="P19111"/>
<dbReference type="STRING" id="9913.ENSBTAP00000005937"/>
<dbReference type="BindingDB" id="P19111"/>
<dbReference type="ChEMBL" id="CHEMBL5695"/>
<dbReference type="DrugCentral" id="P19111"/>
<dbReference type="GlyCosmos" id="P19111">
    <property type="glycosylation" value="2 sites, No reported glycans"/>
</dbReference>
<dbReference type="GlyGen" id="P19111">
    <property type="glycosylation" value="2 sites"/>
</dbReference>
<dbReference type="PaxDb" id="9913-ENSBTAP00000005937"/>
<dbReference type="eggNOG" id="KOG4126">
    <property type="taxonomic scope" value="Eukaryota"/>
</dbReference>
<dbReference type="InParanoid" id="P19111"/>
<dbReference type="BRENDA" id="3.1.3.1">
    <property type="organism ID" value="908"/>
</dbReference>
<dbReference type="SABIO-RK" id="P19111"/>
<dbReference type="STRENDA-DB" id="Y9CBQW">
    <property type="experiment" value="Alkaline phosphatase"/>
</dbReference>
<dbReference type="Proteomes" id="UP000009136">
    <property type="component" value="Unplaced"/>
</dbReference>
<dbReference type="GO" id="GO:0005886">
    <property type="term" value="C:plasma membrane"/>
    <property type="evidence" value="ECO:0000318"/>
    <property type="project" value="GO_Central"/>
</dbReference>
<dbReference type="GO" id="GO:0098552">
    <property type="term" value="C:side of membrane"/>
    <property type="evidence" value="ECO:0007669"/>
    <property type="project" value="UniProtKB-KW"/>
</dbReference>
<dbReference type="GO" id="GO:0004035">
    <property type="term" value="F:alkaline phosphatase activity"/>
    <property type="evidence" value="ECO:0000250"/>
    <property type="project" value="UniProtKB"/>
</dbReference>
<dbReference type="GO" id="GO:0000287">
    <property type="term" value="F:magnesium ion binding"/>
    <property type="evidence" value="ECO:0000250"/>
    <property type="project" value="UniProtKB"/>
</dbReference>
<dbReference type="GO" id="GO:0008270">
    <property type="term" value="F:zinc ion binding"/>
    <property type="evidence" value="ECO:0000250"/>
    <property type="project" value="UniProtKB"/>
</dbReference>
<dbReference type="GO" id="GO:0016311">
    <property type="term" value="P:dephosphorylation"/>
    <property type="evidence" value="ECO:0000250"/>
    <property type="project" value="UniProtKB"/>
</dbReference>
<dbReference type="CDD" id="cd16012">
    <property type="entry name" value="ALP"/>
    <property type="match status" value="1"/>
</dbReference>
<dbReference type="FunFam" id="3.40.720.10:FF:000008">
    <property type="entry name" value="Alkaline phosphatase"/>
    <property type="match status" value="1"/>
</dbReference>
<dbReference type="Gene3D" id="3.40.720.10">
    <property type="entry name" value="Alkaline Phosphatase, subunit A"/>
    <property type="match status" value="1"/>
</dbReference>
<dbReference type="InterPro" id="IPR001952">
    <property type="entry name" value="Alkaline_phosphatase"/>
</dbReference>
<dbReference type="InterPro" id="IPR018299">
    <property type="entry name" value="Alkaline_phosphatase_AS"/>
</dbReference>
<dbReference type="InterPro" id="IPR017850">
    <property type="entry name" value="Alkaline_phosphatase_core_sf"/>
</dbReference>
<dbReference type="PANTHER" id="PTHR11596">
    <property type="entry name" value="ALKALINE PHOSPHATASE"/>
    <property type="match status" value="1"/>
</dbReference>
<dbReference type="PANTHER" id="PTHR11596:SF30">
    <property type="entry name" value="INTESTINAL-TYPE ALKALINE PHOSPHATASE"/>
    <property type="match status" value="1"/>
</dbReference>
<dbReference type="Pfam" id="PF00245">
    <property type="entry name" value="Alk_phosphatase"/>
    <property type="match status" value="1"/>
</dbReference>
<dbReference type="PRINTS" id="PR00113">
    <property type="entry name" value="ALKPHPHTASE"/>
</dbReference>
<dbReference type="SMART" id="SM00098">
    <property type="entry name" value="alkPPc"/>
    <property type="match status" value="1"/>
</dbReference>
<dbReference type="SUPFAM" id="SSF53649">
    <property type="entry name" value="Alkaline phosphatase-like"/>
    <property type="match status" value="1"/>
</dbReference>
<dbReference type="PROSITE" id="PS00123">
    <property type="entry name" value="ALKALINE_PHOSPHATASE"/>
    <property type="match status" value="1"/>
</dbReference>
<gene>
    <name type="primary">ALPI</name>
</gene>
<protein>
    <recommendedName>
        <fullName>Intestinal-type alkaline phosphatase</fullName>
        <shortName>IAP</shortName>
        <shortName>Intestinal alkaline phosphatase</shortName>
        <ecNumber>3.1.3.1</ecNumber>
    </recommendedName>
</protein>
<comment type="function">
    <text evidence="2">Alkaline phosphatase that can hydrolyze various phosphate compounds.</text>
</comment>
<comment type="catalytic activity">
    <reaction evidence="2 4">
        <text>a phosphate monoester + H2O = an alcohol + phosphate</text>
        <dbReference type="Rhea" id="RHEA:15017"/>
        <dbReference type="ChEBI" id="CHEBI:15377"/>
        <dbReference type="ChEBI" id="CHEBI:30879"/>
        <dbReference type="ChEBI" id="CHEBI:43474"/>
        <dbReference type="ChEBI" id="CHEBI:67140"/>
        <dbReference type="EC" id="3.1.3.1"/>
    </reaction>
</comment>
<comment type="cofactor">
    <cofactor evidence="2">
        <name>Mg(2+)</name>
        <dbReference type="ChEBI" id="CHEBI:18420"/>
    </cofactor>
    <text evidence="2">Binds 1 Mg(2+) ion.</text>
</comment>
<comment type="cofactor">
    <cofactor evidence="2">
        <name>Zn(2+)</name>
        <dbReference type="ChEBI" id="CHEBI:29105"/>
    </cofactor>
    <text evidence="2">Binds 2 Zn(2+) ions.</text>
</comment>
<comment type="cofactor">
    <cofactor evidence="1">
        <name>Ca(2+)</name>
        <dbReference type="ChEBI" id="CHEBI:29108"/>
    </cofactor>
</comment>
<comment type="subunit">
    <text evidence="2">Homodimer.</text>
</comment>
<comment type="subcellular location">
    <subcellularLocation>
        <location evidence="2">Cell membrane</location>
        <topology evidence="2">Lipid-anchor</topology>
        <topology evidence="2">GPI-anchor</topology>
    </subcellularLocation>
</comment>
<comment type="miscellaneous">
    <text>In most mammals there are four different isozymes: placental (ALPP), germ cell (ALPG), intestinal (ALPI) and tissue non-specific (liver/bone/kidney) (ALPL/TNAP).</text>
</comment>
<comment type="similarity">
    <text evidence="7">Belongs to the alkaline phosphatase family.</text>
</comment>
<name>PPBI_BOVIN</name>
<organism>
    <name type="scientific">Bos taurus</name>
    <name type="common">Bovine</name>
    <dbReference type="NCBI Taxonomy" id="9913"/>
    <lineage>
        <taxon>Eukaryota</taxon>
        <taxon>Metazoa</taxon>
        <taxon>Chordata</taxon>
        <taxon>Craniata</taxon>
        <taxon>Vertebrata</taxon>
        <taxon>Euteleostomi</taxon>
        <taxon>Mammalia</taxon>
        <taxon>Eutheria</taxon>
        <taxon>Laurasiatheria</taxon>
        <taxon>Artiodactyla</taxon>
        <taxon>Ruminantia</taxon>
        <taxon>Pecora</taxon>
        <taxon>Bovidae</taxon>
        <taxon>Bovinae</taxon>
        <taxon>Bos</taxon>
    </lineage>
</organism>
<feature type="signal peptide" evidence="5 6">
    <location>
        <begin position="1"/>
        <end position="19"/>
    </location>
</feature>
<feature type="chain" id="PRO_0000024035" description="Intestinal-type alkaline phosphatase">
    <location>
        <begin position="20"/>
        <end position="506"/>
    </location>
</feature>
<feature type="propeptide" id="PRO_0000024036" description="Removed in mature form" evidence="3">
    <location>
        <begin position="507"/>
        <end position="533"/>
    </location>
</feature>
<feature type="active site" description="Phosphoserine intermediate" evidence="4 6">
    <location>
        <position position="111"/>
    </location>
</feature>
<feature type="binding site" evidence="2">
    <location>
        <position position="61"/>
    </location>
    <ligand>
        <name>Mg(2+)</name>
        <dbReference type="ChEBI" id="CHEBI:18420"/>
    </ligand>
</feature>
<feature type="binding site" evidence="2">
    <location>
        <position position="61"/>
    </location>
    <ligand>
        <name>Zn(2+)</name>
        <dbReference type="ChEBI" id="CHEBI:29105"/>
        <label>1</label>
    </ligand>
</feature>
<feature type="binding site" evidence="2">
    <location>
        <position position="111"/>
    </location>
    <ligand>
        <name>Zn(2+)</name>
        <dbReference type="ChEBI" id="CHEBI:29105"/>
        <label>1</label>
    </ligand>
</feature>
<feature type="binding site" evidence="2">
    <location>
        <position position="174"/>
    </location>
    <ligand>
        <name>Mg(2+)</name>
        <dbReference type="ChEBI" id="CHEBI:18420"/>
    </ligand>
</feature>
<feature type="binding site" evidence="1">
    <location>
        <position position="235"/>
    </location>
    <ligand>
        <name>Ca(2+)</name>
        <dbReference type="ChEBI" id="CHEBI:29108"/>
    </ligand>
</feature>
<feature type="binding site" evidence="1">
    <location>
        <position position="288"/>
    </location>
    <ligand>
        <name>Ca(2+)</name>
        <dbReference type="ChEBI" id="CHEBI:29108"/>
    </ligand>
</feature>
<feature type="binding site" evidence="1">
    <location>
        <position position="289"/>
    </location>
    <ligand>
        <name>Ca(2+)</name>
        <dbReference type="ChEBI" id="CHEBI:29108"/>
    </ligand>
</feature>
<feature type="binding site" evidence="1">
    <location>
        <position position="304"/>
    </location>
    <ligand>
        <name>Ca(2+)</name>
        <dbReference type="ChEBI" id="CHEBI:29108"/>
    </ligand>
</feature>
<feature type="binding site" evidence="2">
    <location>
        <position position="330"/>
    </location>
    <ligand>
        <name>Mg(2+)</name>
        <dbReference type="ChEBI" id="CHEBI:18420"/>
    </ligand>
</feature>
<feature type="binding site" evidence="2">
    <location>
        <position position="335"/>
    </location>
    <ligand>
        <name>Zn(2+)</name>
        <dbReference type="ChEBI" id="CHEBI:29105"/>
        <label>2</label>
    </ligand>
</feature>
<feature type="binding site" evidence="2">
    <location>
        <position position="339"/>
    </location>
    <ligand>
        <name>Zn(2+)</name>
        <dbReference type="ChEBI" id="CHEBI:29105"/>
        <label>2</label>
    </ligand>
</feature>
<feature type="binding site" evidence="2">
    <location>
        <position position="376"/>
    </location>
    <ligand>
        <name>Zn(2+)</name>
        <dbReference type="ChEBI" id="CHEBI:29105"/>
        <label>1</label>
    </ligand>
</feature>
<feature type="binding site" evidence="2">
    <location>
        <position position="377"/>
    </location>
    <ligand>
        <name>Zn(2+)</name>
        <dbReference type="ChEBI" id="CHEBI:29105"/>
        <label>1</label>
    </ligand>
</feature>
<feature type="binding site" evidence="2">
    <location>
        <position position="451"/>
    </location>
    <ligand>
        <name>Zn(2+)</name>
        <dbReference type="ChEBI" id="CHEBI:29105"/>
        <label>2</label>
    </ligand>
</feature>
<feature type="lipid moiety-binding region" description="GPI-anchor amidated aspartate" evidence="3">
    <location>
        <position position="506"/>
    </location>
</feature>
<feature type="glycosylation site" description="N-linked (GlcNAc...) asparagine" evidence="3">
    <location>
        <position position="268"/>
    </location>
</feature>
<feature type="glycosylation site" description="N-linked (GlcNAc...) asparagine" evidence="3">
    <location>
        <position position="429"/>
    </location>
</feature>
<feature type="disulfide bond" evidence="2">
    <location>
        <begin position="140"/>
        <end position="202"/>
    </location>
</feature>
<feature type="disulfide bond" evidence="2">
    <location>
        <begin position="486"/>
        <end position="493"/>
    </location>
</feature>
<feature type="sequence conflict" description="In Ref. 2; AA sequence." evidence="7" ref="2">
    <original>VTS</original>
    <variation>TSV</variation>
    <location>
        <begin position="148"/>
        <end position="150"/>
    </location>
</feature>
<evidence type="ECO:0000250" key="1">
    <source>
        <dbReference type="UniProtKB" id="P05186"/>
    </source>
</evidence>
<evidence type="ECO:0000250" key="2">
    <source>
        <dbReference type="UniProtKB" id="P15693"/>
    </source>
</evidence>
<evidence type="ECO:0000255" key="3"/>
<evidence type="ECO:0000255" key="4">
    <source>
        <dbReference type="PROSITE-ProRule" id="PRU10042"/>
    </source>
</evidence>
<evidence type="ECO:0000269" key="5">
    <source>
    </source>
</evidence>
<evidence type="ECO:0000269" key="6">
    <source>
    </source>
</evidence>
<evidence type="ECO:0000305" key="7"/>